<sequence length="158" mass="17392">MIKYPMTVQGARALEEELTHLTKVIRPKLSQDIGTARELGDLKENAEYHAAREQQGMVEARIRDIEGRMQNAVVIDVTTIAHTGKVIFGTTVEIANVETDESVVYQIVGEDEADIKKGKISVGSPIARALIAKEEGDVVVVKTPSGVIEYEIIEVRHI</sequence>
<gene>
    <name evidence="1" type="primary">greA</name>
    <name type="ordered locus">PSPTO_4500</name>
</gene>
<keyword id="KW-0238">DNA-binding</keyword>
<keyword id="KW-1185">Reference proteome</keyword>
<keyword id="KW-0804">Transcription</keyword>
<keyword id="KW-0805">Transcription regulation</keyword>
<proteinExistence type="inferred from homology"/>
<accession>Q87WP5</accession>
<protein>
    <recommendedName>
        <fullName evidence="1">Transcription elongation factor GreA</fullName>
    </recommendedName>
    <alternativeName>
        <fullName evidence="1">Transcript cleavage factor GreA</fullName>
    </alternativeName>
</protein>
<feature type="chain" id="PRO_0000176956" description="Transcription elongation factor GreA">
    <location>
        <begin position="1"/>
        <end position="158"/>
    </location>
</feature>
<evidence type="ECO:0000255" key="1">
    <source>
        <dbReference type="HAMAP-Rule" id="MF_00105"/>
    </source>
</evidence>
<reference key="1">
    <citation type="journal article" date="2003" name="Proc. Natl. Acad. Sci. U.S.A.">
        <title>The complete genome sequence of the Arabidopsis and tomato pathogen Pseudomonas syringae pv. tomato DC3000.</title>
        <authorList>
            <person name="Buell C.R."/>
            <person name="Joardar V."/>
            <person name="Lindeberg M."/>
            <person name="Selengut J."/>
            <person name="Paulsen I.T."/>
            <person name="Gwinn M.L."/>
            <person name="Dodson R.J."/>
            <person name="DeBoy R.T."/>
            <person name="Durkin A.S."/>
            <person name="Kolonay J.F."/>
            <person name="Madupu R."/>
            <person name="Daugherty S.C."/>
            <person name="Brinkac L.M."/>
            <person name="Beanan M.J."/>
            <person name="Haft D.H."/>
            <person name="Nelson W.C."/>
            <person name="Davidsen T.M."/>
            <person name="Zafar N."/>
            <person name="Zhou L."/>
            <person name="Liu J."/>
            <person name="Yuan Q."/>
            <person name="Khouri H.M."/>
            <person name="Fedorova N.B."/>
            <person name="Tran B."/>
            <person name="Russell D."/>
            <person name="Berry K.J."/>
            <person name="Utterback T.R."/>
            <person name="Van Aken S.E."/>
            <person name="Feldblyum T.V."/>
            <person name="D'Ascenzo M."/>
            <person name="Deng W.-L."/>
            <person name="Ramos A.R."/>
            <person name="Alfano J.R."/>
            <person name="Cartinhour S."/>
            <person name="Chatterjee A.K."/>
            <person name="Delaney T.P."/>
            <person name="Lazarowitz S.G."/>
            <person name="Martin G.B."/>
            <person name="Schneider D.J."/>
            <person name="Tang X."/>
            <person name="Bender C.L."/>
            <person name="White O."/>
            <person name="Fraser C.M."/>
            <person name="Collmer A."/>
        </authorList>
    </citation>
    <scope>NUCLEOTIDE SEQUENCE [LARGE SCALE GENOMIC DNA]</scope>
    <source>
        <strain>ATCC BAA-871 / DC3000</strain>
    </source>
</reference>
<name>GREA_PSESM</name>
<comment type="function">
    <text evidence="1">Necessary for efficient RNA polymerase transcription elongation past template-encoded arresting sites. The arresting sites in DNA have the property of trapping a certain fraction of elongating RNA polymerases that pass through, resulting in locked ternary complexes. Cleavage of the nascent transcript by cleavage factors such as GreA or GreB allows the resumption of elongation from the new 3'terminus. GreA releases sequences of 2 to 3 nucleotides.</text>
</comment>
<comment type="similarity">
    <text evidence="1">Belongs to the GreA/GreB family.</text>
</comment>
<dbReference type="EMBL" id="AE016853">
    <property type="protein sequence ID" value="AAO57948.1"/>
    <property type="molecule type" value="Genomic_DNA"/>
</dbReference>
<dbReference type="RefSeq" id="NP_794253.1">
    <property type="nucleotide sequence ID" value="NC_004578.1"/>
</dbReference>
<dbReference type="RefSeq" id="WP_005766442.1">
    <property type="nucleotide sequence ID" value="NC_004578.1"/>
</dbReference>
<dbReference type="SMR" id="Q87WP5"/>
<dbReference type="STRING" id="223283.PSPTO_4500"/>
<dbReference type="GeneID" id="1186183"/>
<dbReference type="KEGG" id="pst:PSPTO_4500"/>
<dbReference type="PATRIC" id="fig|223283.9.peg.4616"/>
<dbReference type="eggNOG" id="COG0782">
    <property type="taxonomic scope" value="Bacteria"/>
</dbReference>
<dbReference type="HOGENOM" id="CLU_101379_2_0_6"/>
<dbReference type="OrthoDB" id="9808774at2"/>
<dbReference type="PhylomeDB" id="Q87WP5"/>
<dbReference type="Proteomes" id="UP000002515">
    <property type="component" value="Chromosome"/>
</dbReference>
<dbReference type="GO" id="GO:0003677">
    <property type="term" value="F:DNA binding"/>
    <property type="evidence" value="ECO:0007669"/>
    <property type="project" value="UniProtKB-UniRule"/>
</dbReference>
<dbReference type="GO" id="GO:0070063">
    <property type="term" value="F:RNA polymerase binding"/>
    <property type="evidence" value="ECO:0007669"/>
    <property type="project" value="InterPro"/>
</dbReference>
<dbReference type="GO" id="GO:0006354">
    <property type="term" value="P:DNA-templated transcription elongation"/>
    <property type="evidence" value="ECO:0007669"/>
    <property type="project" value="TreeGrafter"/>
</dbReference>
<dbReference type="GO" id="GO:0032784">
    <property type="term" value="P:regulation of DNA-templated transcription elongation"/>
    <property type="evidence" value="ECO:0007669"/>
    <property type="project" value="UniProtKB-UniRule"/>
</dbReference>
<dbReference type="FunFam" id="1.10.287.180:FF:000001">
    <property type="entry name" value="Transcription elongation factor GreA"/>
    <property type="match status" value="1"/>
</dbReference>
<dbReference type="FunFam" id="3.10.50.30:FF:000001">
    <property type="entry name" value="Transcription elongation factor GreA"/>
    <property type="match status" value="1"/>
</dbReference>
<dbReference type="Gene3D" id="3.10.50.30">
    <property type="entry name" value="Transcription elongation factor, GreA/GreB, C-terminal domain"/>
    <property type="match status" value="1"/>
</dbReference>
<dbReference type="Gene3D" id="1.10.287.180">
    <property type="entry name" value="Transcription elongation factor, GreA/GreB, N-terminal domain"/>
    <property type="match status" value="1"/>
</dbReference>
<dbReference type="HAMAP" id="MF_00105">
    <property type="entry name" value="GreA_GreB"/>
    <property type="match status" value="1"/>
</dbReference>
<dbReference type="InterPro" id="IPR036953">
    <property type="entry name" value="GreA/GreB_C_sf"/>
</dbReference>
<dbReference type="InterPro" id="IPR018151">
    <property type="entry name" value="TF_GreA/GreB_CS"/>
</dbReference>
<dbReference type="InterPro" id="IPR006359">
    <property type="entry name" value="Tscrpt_elong_fac_GreA"/>
</dbReference>
<dbReference type="InterPro" id="IPR028624">
    <property type="entry name" value="Tscrpt_elong_fac_GreA/B"/>
</dbReference>
<dbReference type="InterPro" id="IPR001437">
    <property type="entry name" value="Tscrpt_elong_fac_GreA/B_C"/>
</dbReference>
<dbReference type="InterPro" id="IPR023459">
    <property type="entry name" value="Tscrpt_elong_fac_GreA/B_fam"/>
</dbReference>
<dbReference type="InterPro" id="IPR022691">
    <property type="entry name" value="Tscrpt_elong_fac_GreA/B_N"/>
</dbReference>
<dbReference type="InterPro" id="IPR036805">
    <property type="entry name" value="Tscrpt_elong_fac_GreA/B_N_sf"/>
</dbReference>
<dbReference type="NCBIfam" id="TIGR01462">
    <property type="entry name" value="greA"/>
    <property type="match status" value="1"/>
</dbReference>
<dbReference type="NCBIfam" id="NF001261">
    <property type="entry name" value="PRK00226.1-2"/>
    <property type="match status" value="1"/>
</dbReference>
<dbReference type="NCBIfam" id="NF001263">
    <property type="entry name" value="PRK00226.1-4"/>
    <property type="match status" value="1"/>
</dbReference>
<dbReference type="NCBIfam" id="NF001264">
    <property type="entry name" value="PRK00226.1-5"/>
    <property type="match status" value="1"/>
</dbReference>
<dbReference type="PANTHER" id="PTHR30437">
    <property type="entry name" value="TRANSCRIPTION ELONGATION FACTOR GREA"/>
    <property type="match status" value="1"/>
</dbReference>
<dbReference type="PANTHER" id="PTHR30437:SF4">
    <property type="entry name" value="TRANSCRIPTION ELONGATION FACTOR GREA"/>
    <property type="match status" value="1"/>
</dbReference>
<dbReference type="Pfam" id="PF01272">
    <property type="entry name" value="GreA_GreB"/>
    <property type="match status" value="1"/>
</dbReference>
<dbReference type="Pfam" id="PF03449">
    <property type="entry name" value="GreA_GreB_N"/>
    <property type="match status" value="1"/>
</dbReference>
<dbReference type="PIRSF" id="PIRSF006092">
    <property type="entry name" value="GreA_GreB"/>
    <property type="match status" value="1"/>
</dbReference>
<dbReference type="SUPFAM" id="SSF54534">
    <property type="entry name" value="FKBP-like"/>
    <property type="match status" value="1"/>
</dbReference>
<dbReference type="SUPFAM" id="SSF46557">
    <property type="entry name" value="GreA transcript cleavage protein, N-terminal domain"/>
    <property type="match status" value="1"/>
</dbReference>
<dbReference type="PROSITE" id="PS00829">
    <property type="entry name" value="GREAB_1"/>
    <property type="match status" value="1"/>
</dbReference>
<dbReference type="PROSITE" id="PS00830">
    <property type="entry name" value="GREAB_2"/>
    <property type="match status" value="1"/>
</dbReference>
<organism>
    <name type="scientific">Pseudomonas syringae pv. tomato (strain ATCC BAA-871 / DC3000)</name>
    <dbReference type="NCBI Taxonomy" id="223283"/>
    <lineage>
        <taxon>Bacteria</taxon>
        <taxon>Pseudomonadati</taxon>
        <taxon>Pseudomonadota</taxon>
        <taxon>Gammaproteobacteria</taxon>
        <taxon>Pseudomonadales</taxon>
        <taxon>Pseudomonadaceae</taxon>
        <taxon>Pseudomonas</taxon>
    </lineage>
</organism>